<feature type="chain" id="PRO_1000093512" description="Peptide chain release factor 1">
    <location>
        <begin position="1"/>
        <end position="359"/>
    </location>
</feature>
<feature type="modified residue" description="N5-methylglutamine" evidence="1">
    <location>
        <position position="236"/>
    </location>
</feature>
<organism>
    <name type="scientific">Streptococcus pneumoniae (strain Hungary19A-6)</name>
    <dbReference type="NCBI Taxonomy" id="487214"/>
    <lineage>
        <taxon>Bacteria</taxon>
        <taxon>Bacillati</taxon>
        <taxon>Bacillota</taxon>
        <taxon>Bacilli</taxon>
        <taxon>Lactobacillales</taxon>
        <taxon>Streptococcaceae</taxon>
        <taxon>Streptococcus</taxon>
    </lineage>
</organism>
<reference key="1">
    <citation type="journal article" date="2010" name="Genome Biol.">
        <title>Structure and dynamics of the pan-genome of Streptococcus pneumoniae and closely related species.</title>
        <authorList>
            <person name="Donati C."/>
            <person name="Hiller N.L."/>
            <person name="Tettelin H."/>
            <person name="Muzzi A."/>
            <person name="Croucher N.J."/>
            <person name="Angiuoli S.V."/>
            <person name="Oggioni M."/>
            <person name="Dunning Hotopp J.C."/>
            <person name="Hu F.Z."/>
            <person name="Riley D.R."/>
            <person name="Covacci A."/>
            <person name="Mitchell T.J."/>
            <person name="Bentley S.D."/>
            <person name="Kilian M."/>
            <person name="Ehrlich G.D."/>
            <person name="Rappuoli R."/>
            <person name="Moxon E.R."/>
            <person name="Masignani V."/>
        </authorList>
    </citation>
    <scope>NUCLEOTIDE SEQUENCE [LARGE SCALE GENOMIC DNA]</scope>
    <source>
        <strain>Hungary19A-6</strain>
    </source>
</reference>
<gene>
    <name evidence="1" type="primary">prfA</name>
    <name type="ordered locus">SPH_1123</name>
</gene>
<name>RF1_STRPI</name>
<dbReference type="EMBL" id="CP000936">
    <property type="protein sequence ID" value="ACA36334.1"/>
    <property type="molecule type" value="Genomic_DNA"/>
</dbReference>
<dbReference type="RefSeq" id="WP_001028828.1">
    <property type="nucleotide sequence ID" value="NC_010380.1"/>
</dbReference>
<dbReference type="SMR" id="B1IBH9"/>
<dbReference type="KEGG" id="spv:SPH_1123"/>
<dbReference type="HOGENOM" id="CLU_036856_0_1_9"/>
<dbReference type="Proteomes" id="UP000002163">
    <property type="component" value="Chromosome"/>
</dbReference>
<dbReference type="GO" id="GO:0005737">
    <property type="term" value="C:cytoplasm"/>
    <property type="evidence" value="ECO:0007669"/>
    <property type="project" value="UniProtKB-SubCell"/>
</dbReference>
<dbReference type="GO" id="GO:0016149">
    <property type="term" value="F:translation release factor activity, codon specific"/>
    <property type="evidence" value="ECO:0007669"/>
    <property type="project" value="UniProtKB-UniRule"/>
</dbReference>
<dbReference type="FunFam" id="3.30.160.20:FF:000027">
    <property type="entry name" value="Peptide chain release factor 1"/>
    <property type="match status" value="1"/>
</dbReference>
<dbReference type="FunFam" id="3.30.70.1660:FF:000002">
    <property type="entry name" value="Peptide chain release factor 1"/>
    <property type="match status" value="1"/>
</dbReference>
<dbReference type="FunFam" id="3.30.70.1660:FF:000004">
    <property type="entry name" value="Peptide chain release factor 1"/>
    <property type="match status" value="1"/>
</dbReference>
<dbReference type="Gene3D" id="3.30.160.20">
    <property type="match status" value="1"/>
</dbReference>
<dbReference type="Gene3D" id="3.30.70.1660">
    <property type="match status" value="2"/>
</dbReference>
<dbReference type="Gene3D" id="6.10.140.1950">
    <property type="match status" value="1"/>
</dbReference>
<dbReference type="HAMAP" id="MF_00093">
    <property type="entry name" value="Rel_fac_1"/>
    <property type="match status" value="1"/>
</dbReference>
<dbReference type="InterPro" id="IPR005139">
    <property type="entry name" value="PCRF"/>
</dbReference>
<dbReference type="InterPro" id="IPR000352">
    <property type="entry name" value="Pep_chain_release_fac_I"/>
</dbReference>
<dbReference type="InterPro" id="IPR045853">
    <property type="entry name" value="Pep_chain_release_fac_I_sf"/>
</dbReference>
<dbReference type="InterPro" id="IPR050057">
    <property type="entry name" value="Prokaryotic/Mito_RF"/>
</dbReference>
<dbReference type="InterPro" id="IPR004373">
    <property type="entry name" value="RF-1"/>
</dbReference>
<dbReference type="NCBIfam" id="TIGR00019">
    <property type="entry name" value="prfA"/>
    <property type="match status" value="1"/>
</dbReference>
<dbReference type="NCBIfam" id="NF001859">
    <property type="entry name" value="PRK00591.1"/>
    <property type="match status" value="1"/>
</dbReference>
<dbReference type="PANTHER" id="PTHR43804">
    <property type="entry name" value="LD18447P"/>
    <property type="match status" value="1"/>
</dbReference>
<dbReference type="PANTHER" id="PTHR43804:SF7">
    <property type="entry name" value="LD18447P"/>
    <property type="match status" value="1"/>
</dbReference>
<dbReference type="Pfam" id="PF03462">
    <property type="entry name" value="PCRF"/>
    <property type="match status" value="1"/>
</dbReference>
<dbReference type="Pfam" id="PF00472">
    <property type="entry name" value="RF-1"/>
    <property type="match status" value="1"/>
</dbReference>
<dbReference type="SMART" id="SM00937">
    <property type="entry name" value="PCRF"/>
    <property type="match status" value="1"/>
</dbReference>
<dbReference type="SUPFAM" id="SSF75620">
    <property type="entry name" value="Release factor"/>
    <property type="match status" value="1"/>
</dbReference>
<dbReference type="PROSITE" id="PS00745">
    <property type="entry name" value="RF_PROK_I"/>
    <property type="match status" value="1"/>
</dbReference>
<accession>B1IBH9</accession>
<keyword id="KW-0963">Cytoplasm</keyword>
<keyword id="KW-0488">Methylation</keyword>
<keyword id="KW-0648">Protein biosynthesis</keyword>
<protein>
    <recommendedName>
        <fullName evidence="1">Peptide chain release factor 1</fullName>
        <shortName evidence="1">RF-1</shortName>
    </recommendedName>
</protein>
<comment type="function">
    <text evidence="1">Peptide chain release factor 1 directs the termination of translation in response to the peptide chain termination codons UAG and UAA.</text>
</comment>
<comment type="subcellular location">
    <subcellularLocation>
        <location evidence="1">Cytoplasm</location>
    </subcellularLocation>
</comment>
<comment type="PTM">
    <text evidence="1">Methylated by PrmC. Methylation increases the termination efficiency of RF1.</text>
</comment>
<comment type="similarity">
    <text evidence="1">Belongs to the prokaryotic/mitochondrial release factor family.</text>
</comment>
<sequence>MNIYDQLQAVEDRYEELGELLSDPDVVSDTRRFMELSKEEASNRDTVIAYREYKQVLQNIVDAEEMIKESGGDADLEEMAKQELKDAKAEKEEYEEKLKILLLPKDPNDDKNIILEIRGAAGGDEAALFAGDLLTMYQKYAEAQGWRFEVMEASMNGVGGFKEVVAMVSGQSVYSKLKYESGAHRVQRVPVTESQGRVHTSTATVLVMPEVEEVEYDIDPKDLRVDIYHASGAGGQNVNKVATAVRIVHLPTNIKVEMQEERTQQKNREKAMKIIRARVADHFAQIAQDEQDAERKSTIGTGDRSERIRTYNFPQNRVTDHRIGLTLQKLDTILSGKLDEVMDALVLYDQTQKLEELNK</sequence>
<evidence type="ECO:0000255" key="1">
    <source>
        <dbReference type="HAMAP-Rule" id="MF_00093"/>
    </source>
</evidence>
<proteinExistence type="inferred from homology"/>